<accession>Q0VAA5</accession>
<accession>Q96N12</accession>
<feature type="chain" id="PRO_0000305691" description="PI-PLC X domain-containing protein 2">
    <location>
        <begin position="1"/>
        <end position="305"/>
    </location>
</feature>
<feature type="domain" description="PI-PLC X-box" evidence="1">
    <location>
        <begin position="42"/>
        <end position="215"/>
    </location>
</feature>
<feature type="active site" evidence="1">
    <location>
        <position position="57"/>
    </location>
</feature>
<feature type="active site" evidence="1">
    <location>
        <position position="132"/>
    </location>
</feature>
<feature type="splice variant" id="VSP_028349" description="In isoform 2." evidence="3">
    <original>SNRWNSHGPSLLSQE</original>
    <variation>RLALIPVYPLRFSR</variation>
    <location>
        <begin position="289"/>
        <end position="303"/>
    </location>
</feature>
<evidence type="ECO:0000255" key="1">
    <source>
        <dbReference type="PROSITE-ProRule" id="PRU00270"/>
    </source>
</evidence>
<evidence type="ECO:0000269" key="2">
    <source>
    </source>
</evidence>
<evidence type="ECO:0000303" key="3">
    <source>
    </source>
</evidence>
<evidence type="ECO:0000303" key="4">
    <source>
    </source>
</evidence>
<evidence type="ECO:0000305" key="5">
    <source>
    </source>
</evidence>
<organism>
    <name type="scientific">Homo sapiens</name>
    <name type="common">Human</name>
    <dbReference type="NCBI Taxonomy" id="9606"/>
    <lineage>
        <taxon>Eukaryota</taxon>
        <taxon>Metazoa</taxon>
        <taxon>Chordata</taxon>
        <taxon>Craniata</taxon>
        <taxon>Vertebrata</taxon>
        <taxon>Euteleostomi</taxon>
        <taxon>Mammalia</taxon>
        <taxon>Eutheria</taxon>
        <taxon>Euarchontoglires</taxon>
        <taxon>Primates</taxon>
        <taxon>Haplorrhini</taxon>
        <taxon>Catarrhini</taxon>
        <taxon>Hominidae</taxon>
        <taxon>Homo</taxon>
    </lineage>
</organism>
<keyword id="KW-0025">Alternative splicing</keyword>
<keyword id="KW-0378">Hydrolase</keyword>
<keyword id="KW-0442">Lipid degradation</keyword>
<keyword id="KW-0443">Lipid metabolism</keyword>
<keyword id="KW-0539">Nucleus</keyword>
<keyword id="KW-1267">Proteomics identification</keyword>
<keyword id="KW-1185">Reference proteome</keyword>
<keyword id="KW-0807">Transducer</keyword>
<comment type="function">
    <text evidence="2 5">Catalyzes the hydrolysis of inositol from phosphatidylinositol (1,2-diacyl-sn-glycero-3-phospho-(1D-myo-inositol), PI) (PubMed:22732399). Could also hydrolyze various multi-phosphorylated derivatives of PI, such as phosphatidylinositol-4,5 bisphosphate (PIP2), releasing inositol-1,4,5-trisphosphate (IP3) and the protein kinase C activator diacylglycerol (DAG), therefore mediating cell signaling (Probable).</text>
</comment>
<comment type="catalytic activity">
    <reaction evidence="2">
        <text>a 1,2-diacyl-sn-glycero-3-phospho-(1D-myo-inositol) + H2O = 1D-myo-inositol 1-phosphate + a 1,2-diacyl-sn-glycerol + H(+)</text>
        <dbReference type="Rhea" id="RHEA:43484"/>
        <dbReference type="ChEBI" id="CHEBI:15377"/>
        <dbReference type="ChEBI" id="CHEBI:15378"/>
        <dbReference type="ChEBI" id="CHEBI:17815"/>
        <dbReference type="ChEBI" id="CHEBI:57880"/>
        <dbReference type="ChEBI" id="CHEBI:58433"/>
    </reaction>
    <physiologicalReaction direction="left-to-right" evidence="5">
        <dbReference type="Rhea" id="RHEA:43485"/>
    </physiologicalReaction>
</comment>
<comment type="subcellular location">
    <subcellularLocation>
        <location evidence="2">Nucleus</location>
    </subcellularLocation>
</comment>
<comment type="alternative products">
    <event type="alternative splicing"/>
    <isoform>
        <id>Q0VAA5-1</id>
        <name>1</name>
        <sequence type="displayed"/>
    </isoform>
    <isoform>
        <id>Q0VAA5-2</id>
        <name>2</name>
        <sequence type="described" ref="VSP_028349"/>
    </isoform>
</comment>
<comment type="tissue specificity">
    <text evidence="2">Widely expressed.</text>
</comment>
<name>PLCX2_HUMAN</name>
<dbReference type="EMBL" id="AK056141">
    <property type="protein sequence ID" value="BAB71103.1"/>
    <property type="molecule type" value="mRNA"/>
</dbReference>
<dbReference type="EMBL" id="BC121155">
    <property type="protein sequence ID" value="AAI21156.1"/>
    <property type="molecule type" value="mRNA"/>
</dbReference>
<dbReference type="EMBL" id="BC121156">
    <property type="protein sequence ID" value="AAI21157.1"/>
    <property type="molecule type" value="mRNA"/>
</dbReference>
<dbReference type="RefSeq" id="NP_001172035.1">
    <property type="nucleotide sequence ID" value="NM_001185106.1"/>
</dbReference>
<dbReference type="RefSeq" id="NP_695000.1">
    <property type="nucleotide sequence ID" value="NM_153268.3"/>
</dbReference>
<dbReference type="BioGRID" id="129195">
    <property type="interactions" value="5"/>
</dbReference>
<dbReference type="FunCoup" id="Q0VAA5">
    <property type="interactions" value="82"/>
</dbReference>
<dbReference type="IntAct" id="Q0VAA5">
    <property type="interactions" value="3"/>
</dbReference>
<dbReference type="STRING" id="9606.ENSP00000420686"/>
<dbReference type="GlyGen" id="Q0VAA5">
    <property type="glycosylation" value="1 site, 1 O-linked glycan (1 site)"/>
</dbReference>
<dbReference type="iPTMnet" id="Q0VAA5"/>
<dbReference type="PhosphoSitePlus" id="Q0VAA5"/>
<dbReference type="BioMuta" id="PLCXD2"/>
<dbReference type="DMDM" id="121948095"/>
<dbReference type="MassIVE" id="Q0VAA5"/>
<dbReference type="PaxDb" id="9606-ENSP00000420686"/>
<dbReference type="PeptideAtlas" id="Q0VAA5"/>
<dbReference type="ProteomicsDB" id="58789">
    <molecule id="Q0VAA5-1"/>
</dbReference>
<dbReference type="ProteomicsDB" id="58790">
    <molecule id="Q0VAA5-2"/>
</dbReference>
<dbReference type="Antibodypedia" id="64569">
    <property type="antibodies" value="90 antibodies from 18 providers"/>
</dbReference>
<dbReference type="DNASU" id="257068"/>
<dbReference type="Ensembl" id="ENST00000393934.7">
    <molecule id="Q0VAA5-2"/>
    <property type="protein sequence ID" value="ENSP00000377511.3"/>
    <property type="gene ID" value="ENSG00000240891.8"/>
</dbReference>
<dbReference type="Ensembl" id="ENST00000477665.2">
    <molecule id="Q0VAA5-1"/>
    <property type="protein sequence ID" value="ENSP00000420686.1"/>
    <property type="gene ID" value="ENSG00000240891.8"/>
</dbReference>
<dbReference type="UCSC" id="uc003dxz.3">
    <molecule id="Q0VAA5-1"/>
    <property type="organism name" value="human"/>
</dbReference>
<dbReference type="AGR" id="HGNC:26462"/>
<dbReference type="DisGeNET" id="257068"/>
<dbReference type="GeneCards" id="PLCXD2"/>
<dbReference type="HGNC" id="HGNC:26462">
    <property type="gene designation" value="PLCXD2"/>
</dbReference>
<dbReference type="HPA" id="ENSG00000240891">
    <property type="expression patterns" value="Tissue enhanced (retina)"/>
</dbReference>
<dbReference type="MIM" id="617015">
    <property type="type" value="gene"/>
</dbReference>
<dbReference type="neXtProt" id="NX_Q0VAA5"/>
<dbReference type="OpenTargets" id="ENSG00000240891"/>
<dbReference type="PharmGKB" id="PA134928848"/>
<dbReference type="VEuPathDB" id="HostDB:ENSG00000240891"/>
<dbReference type="eggNOG" id="KOG4306">
    <property type="taxonomic scope" value="Eukaryota"/>
</dbReference>
<dbReference type="GeneTree" id="ENSGT00940000162182"/>
<dbReference type="HOGENOM" id="CLU_051926_0_0_1"/>
<dbReference type="InParanoid" id="Q0VAA5"/>
<dbReference type="OrthoDB" id="1046782at2759"/>
<dbReference type="PAN-GO" id="Q0VAA5">
    <property type="GO annotations" value="1 GO annotation based on evolutionary models"/>
</dbReference>
<dbReference type="PhylomeDB" id="Q0VAA5"/>
<dbReference type="TreeFam" id="TF314457"/>
<dbReference type="PathwayCommons" id="Q0VAA5"/>
<dbReference type="SignaLink" id="Q0VAA5"/>
<dbReference type="BioGRID-ORCS" id="257068">
    <property type="hits" value="8 hits in 1148 CRISPR screens"/>
</dbReference>
<dbReference type="ChiTaRS" id="PLCXD2">
    <property type="organism name" value="human"/>
</dbReference>
<dbReference type="GenomeRNAi" id="257068"/>
<dbReference type="Pharos" id="Q0VAA5">
    <property type="development level" value="Tdark"/>
</dbReference>
<dbReference type="PRO" id="PR:Q0VAA5"/>
<dbReference type="Proteomes" id="UP000005640">
    <property type="component" value="Chromosome 3"/>
</dbReference>
<dbReference type="RNAct" id="Q0VAA5">
    <property type="molecule type" value="protein"/>
</dbReference>
<dbReference type="Bgee" id="ENSG00000240891">
    <property type="expression patterns" value="Expressed in right lobe of liver and 137 other cell types or tissues"/>
</dbReference>
<dbReference type="ExpressionAtlas" id="Q0VAA5">
    <property type="expression patterns" value="baseline and differential"/>
</dbReference>
<dbReference type="GO" id="GO:0005634">
    <property type="term" value="C:nucleus"/>
    <property type="evidence" value="ECO:0007669"/>
    <property type="project" value="UniProtKB-SubCell"/>
</dbReference>
<dbReference type="GO" id="GO:0008081">
    <property type="term" value="F:phosphoric diester hydrolase activity"/>
    <property type="evidence" value="ECO:0000318"/>
    <property type="project" value="GO_Central"/>
</dbReference>
<dbReference type="GO" id="GO:0016042">
    <property type="term" value="P:lipid catabolic process"/>
    <property type="evidence" value="ECO:0007669"/>
    <property type="project" value="UniProtKB-KW"/>
</dbReference>
<dbReference type="GO" id="GO:0007165">
    <property type="term" value="P:signal transduction"/>
    <property type="evidence" value="ECO:0007669"/>
    <property type="project" value="UniProtKB-KW"/>
</dbReference>
<dbReference type="CDD" id="cd08616">
    <property type="entry name" value="PI-PLCXD1c"/>
    <property type="match status" value="1"/>
</dbReference>
<dbReference type="Gene3D" id="3.20.20.190">
    <property type="entry name" value="Phosphatidylinositol (PI) phosphodiesterase"/>
    <property type="match status" value="1"/>
</dbReference>
<dbReference type="InterPro" id="IPR051057">
    <property type="entry name" value="PI-PLC_domain"/>
</dbReference>
<dbReference type="InterPro" id="IPR017946">
    <property type="entry name" value="PLC-like_Pdiesterase_TIM-brl"/>
</dbReference>
<dbReference type="InterPro" id="IPR042158">
    <property type="entry name" value="PLCXD1/2/3"/>
</dbReference>
<dbReference type="InterPro" id="IPR000909">
    <property type="entry name" value="PLipase_C_PInositol-sp_X_dom"/>
</dbReference>
<dbReference type="PANTHER" id="PTHR13593">
    <property type="match status" value="1"/>
</dbReference>
<dbReference type="PANTHER" id="PTHR13593:SF32">
    <property type="entry name" value="PI-PLC X DOMAIN-CONTAINING PROTEIN 2"/>
    <property type="match status" value="1"/>
</dbReference>
<dbReference type="SMART" id="SM00148">
    <property type="entry name" value="PLCXc"/>
    <property type="match status" value="1"/>
</dbReference>
<dbReference type="SUPFAM" id="SSF51695">
    <property type="entry name" value="PLC-like phosphodiesterases"/>
    <property type="match status" value="1"/>
</dbReference>
<dbReference type="PROSITE" id="PS50007">
    <property type="entry name" value="PIPLC_X_DOMAIN"/>
    <property type="match status" value="1"/>
</dbReference>
<reference key="1">
    <citation type="journal article" date="2004" name="Nat. Genet.">
        <title>Complete sequencing and characterization of 21,243 full-length human cDNAs.</title>
        <authorList>
            <person name="Ota T."/>
            <person name="Suzuki Y."/>
            <person name="Nishikawa T."/>
            <person name="Otsuki T."/>
            <person name="Sugiyama T."/>
            <person name="Irie R."/>
            <person name="Wakamatsu A."/>
            <person name="Hayashi K."/>
            <person name="Sato H."/>
            <person name="Nagai K."/>
            <person name="Kimura K."/>
            <person name="Makita H."/>
            <person name="Sekine M."/>
            <person name="Obayashi M."/>
            <person name="Nishi T."/>
            <person name="Shibahara T."/>
            <person name="Tanaka T."/>
            <person name="Ishii S."/>
            <person name="Yamamoto J."/>
            <person name="Saito K."/>
            <person name="Kawai Y."/>
            <person name="Isono Y."/>
            <person name="Nakamura Y."/>
            <person name="Nagahari K."/>
            <person name="Murakami K."/>
            <person name="Yasuda T."/>
            <person name="Iwayanagi T."/>
            <person name="Wagatsuma M."/>
            <person name="Shiratori A."/>
            <person name="Sudo H."/>
            <person name="Hosoiri T."/>
            <person name="Kaku Y."/>
            <person name="Kodaira H."/>
            <person name="Kondo H."/>
            <person name="Sugawara M."/>
            <person name="Takahashi M."/>
            <person name="Kanda K."/>
            <person name="Yokoi T."/>
            <person name="Furuya T."/>
            <person name="Kikkawa E."/>
            <person name="Omura Y."/>
            <person name="Abe K."/>
            <person name="Kamihara K."/>
            <person name="Katsuta N."/>
            <person name="Sato K."/>
            <person name="Tanikawa M."/>
            <person name="Yamazaki M."/>
            <person name="Ninomiya K."/>
            <person name="Ishibashi T."/>
            <person name="Yamashita H."/>
            <person name="Murakawa K."/>
            <person name="Fujimori K."/>
            <person name="Tanai H."/>
            <person name="Kimata M."/>
            <person name="Watanabe M."/>
            <person name="Hiraoka S."/>
            <person name="Chiba Y."/>
            <person name="Ishida S."/>
            <person name="Ono Y."/>
            <person name="Takiguchi S."/>
            <person name="Watanabe S."/>
            <person name="Yosida M."/>
            <person name="Hotuta T."/>
            <person name="Kusano J."/>
            <person name="Kanehori K."/>
            <person name="Takahashi-Fujii A."/>
            <person name="Hara H."/>
            <person name="Tanase T.-O."/>
            <person name="Nomura Y."/>
            <person name="Togiya S."/>
            <person name="Komai F."/>
            <person name="Hara R."/>
            <person name="Takeuchi K."/>
            <person name="Arita M."/>
            <person name="Imose N."/>
            <person name="Musashino K."/>
            <person name="Yuuki H."/>
            <person name="Oshima A."/>
            <person name="Sasaki N."/>
            <person name="Aotsuka S."/>
            <person name="Yoshikawa Y."/>
            <person name="Matsunawa H."/>
            <person name="Ichihara T."/>
            <person name="Shiohata N."/>
            <person name="Sano S."/>
            <person name="Moriya S."/>
            <person name="Momiyama H."/>
            <person name="Satoh N."/>
            <person name="Takami S."/>
            <person name="Terashima Y."/>
            <person name="Suzuki O."/>
            <person name="Nakagawa S."/>
            <person name="Senoh A."/>
            <person name="Mizoguchi H."/>
            <person name="Goto Y."/>
            <person name="Shimizu F."/>
            <person name="Wakebe H."/>
            <person name="Hishigaki H."/>
            <person name="Watanabe T."/>
            <person name="Sugiyama A."/>
            <person name="Takemoto M."/>
            <person name="Kawakami B."/>
            <person name="Yamazaki M."/>
            <person name="Watanabe K."/>
            <person name="Kumagai A."/>
            <person name="Itakura S."/>
            <person name="Fukuzumi Y."/>
            <person name="Fujimori Y."/>
            <person name="Komiyama M."/>
            <person name="Tashiro H."/>
            <person name="Tanigami A."/>
            <person name="Fujiwara T."/>
            <person name="Ono T."/>
            <person name="Yamada K."/>
            <person name="Fujii Y."/>
            <person name="Ozaki K."/>
            <person name="Hirao M."/>
            <person name="Ohmori Y."/>
            <person name="Kawabata A."/>
            <person name="Hikiji T."/>
            <person name="Kobatake N."/>
            <person name="Inagaki H."/>
            <person name="Ikema Y."/>
            <person name="Okamoto S."/>
            <person name="Okitani R."/>
            <person name="Kawakami T."/>
            <person name="Noguchi S."/>
            <person name="Itoh T."/>
            <person name="Shigeta K."/>
            <person name="Senba T."/>
            <person name="Matsumura K."/>
            <person name="Nakajima Y."/>
            <person name="Mizuno T."/>
            <person name="Morinaga M."/>
            <person name="Sasaki M."/>
            <person name="Togashi T."/>
            <person name="Oyama M."/>
            <person name="Hata H."/>
            <person name="Watanabe M."/>
            <person name="Komatsu T."/>
            <person name="Mizushima-Sugano J."/>
            <person name="Satoh T."/>
            <person name="Shirai Y."/>
            <person name="Takahashi Y."/>
            <person name="Nakagawa K."/>
            <person name="Okumura K."/>
            <person name="Nagase T."/>
            <person name="Nomura N."/>
            <person name="Kikuchi H."/>
            <person name="Masuho Y."/>
            <person name="Yamashita R."/>
            <person name="Nakai K."/>
            <person name="Yada T."/>
            <person name="Nakamura Y."/>
            <person name="Ohara O."/>
            <person name="Isogai T."/>
            <person name="Sugano S."/>
        </authorList>
    </citation>
    <scope>NUCLEOTIDE SEQUENCE [LARGE SCALE MRNA] (ISOFORM 2)</scope>
</reference>
<reference key="2">
    <citation type="journal article" date="2004" name="Genome Res.">
        <title>The status, quality, and expansion of the NIH full-length cDNA project: the Mammalian Gene Collection (MGC).</title>
        <authorList>
            <consortium name="The MGC Project Team"/>
        </authorList>
    </citation>
    <scope>NUCLEOTIDE SEQUENCE [LARGE SCALE MRNA] (ISOFORM 1)</scope>
</reference>
<reference key="3">
    <citation type="journal article" date="2012" name="Biochem. Biophys. Res. Commun.">
        <title>Cloning, tissue distribution and sub-cellular localisation of phospholipase C X-domain containing protein (PLCXD) isoforms.</title>
        <authorList>
            <person name="Gellatly S.A."/>
            <person name="Kalujnaia S."/>
            <person name="Cramb G."/>
        </authorList>
    </citation>
    <scope>SUBCELLULAR LOCATION</scope>
    <scope>TISSUE SPECIFICITY</scope>
    <scope>FUNCTION</scope>
    <scope>CATALYTIC ACTIVITY</scope>
</reference>
<proteinExistence type="evidence at protein level"/>
<gene>
    <name type="primary">PLCXD2</name>
</gene>
<protein>
    <recommendedName>
        <fullName evidence="4">PI-PLC X domain-containing protein 2</fullName>
    </recommendedName>
    <alternativeName>
        <fullName>Phospholipase C X-domain containing protein 2</fullName>
        <shortName evidence="4">PLCXD-2</shortName>
    </alternativeName>
</protein>
<sequence>MLAVRKARRKLRMGTICSPNPSGTKTSSEVCNADWMASLPPHLHNLPLSNLAIPGSHDSFSYWVDEKSPVGPDQTQAIKRLARISLVKKLMKKWSVTQNLTFREQLEAGIRYFDLRVSSKPGDADQEIYFIHGLFGIKVWDGLMEIDSFLTQHPQEIIFLDFNHFYAMDETHHKCLVLRIQEAFGNKLCPACSVESLTLRTLWEKNCQVLIFYHCPFYKQYPFLWPGKKIPAPWANTTSVRKLILFLETTLSERASRGSFHVSQAILTPRVKTIARGLVGGLKNTLVHSNRWNSHGPSLLSQERS</sequence>